<sequence length="1044" mass="115761">MMAAEAGGEEGGPVTAGAAGGGAAAASGAYPAVCRVKIPAALPVAAAAPFPGLAEAGVAATLGGGAALGSGFLGAGSVAGTPGGVGLSAGGAAAGVAGVAAAAAGAGGEMAFAKGTTSLPTETFGAGGGFPPLPPPPPQLPTLGAGLGTVDEGDSLDGPEYEEEEVAIPLTAPPTNQWYHGKLDRTIAEERLRQAGKSGSYLIRESDRRPGSFVLSFLSQTNVVNHFRIIAMCGDYYIGGRRFSSLSDLIGYYSHVSCLLKGEKLLYPVAPPEPVEDRRRVRAILPYTKVPDTDEISFLKGDMFIVHNELEDGWMWVTNLRTDEQGLIVEDLVEEVGREEDPHEGKIWFHGKISKQEAYNLLMTVGQACSFLVRPSDNTPGDYSLYFRTSENIQRFKICPTPNNQFMMGGRYYNSIGDIIDHYRKEQIVEGYYLKEPVPMQDQEQVLNDAVDGKEIYNTIRRKTKDAFYKNIVKKGYLLKKGKGKRWKNLYFILEGSDAQLIYFESEKRATKPKGLIDLSVCSVYVVHDSLFGRPNCFQIVVQHFSEEHYIFYFAGETPEQAEDWMKGLQAFCNLRKSSPGTSNKRLRQVSSLILHIEEAHKLPVKHFTNPYCNIYLNSVQVAKTHAREGQNPVWSEEFVFDDLPPDINRFEITLSNKTKKSKDPDILFMRCQLSRLQKGHATDEWFLLSSHIPLKGIEPGSLRVRARYSMEKIMPEEEYSEFKELILQKELHVVYALSHVCGQDRTLLASILLKIFLHEKLESLLLCTLNDREISMEDEATTLFRATTLASTLMEQSMKATATQFVHHALKDSILRIMESKQSCELSPSKLEKNEDVNTNLAHLLNILSELVEKIFMASEILPPTLRYIYGCLQKSVQHKWPTNTTMRTRVVSGFVFLRLICPAILNPRMFNIISDSPSPIAARTLTLVAKSVQNLANLVEFGAKEPYMEGVNPFIKSNKHRMIMFLDELGNVPELPDTTEHSRTDLCRDLAALHEICVAHSDELRTLSNERGAQQHVLKKLLAITELLQQKQNQYTKTNDVR</sequence>
<organism>
    <name type="scientific">Bos taurus</name>
    <name type="common">Bovine</name>
    <dbReference type="NCBI Taxonomy" id="9913"/>
    <lineage>
        <taxon>Eukaryota</taxon>
        <taxon>Metazoa</taxon>
        <taxon>Chordata</taxon>
        <taxon>Craniata</taxon>
        <taxon>Vertebrata</taxon>
        <taxon>Euteleostomi</taxon>
        <taxon>Mammalia</taxon>
        <taxon>Eutheria</taxon>
        <taxon>Laurasiatheria</taxon>
        <taxon>Artiodactyla</taxon>
        <taxon>Ruminantia</taxon>
        <taxon>Pecora</taxon>
        <taxon>Bovidae</taxon>
        <taxon>Bovinae</taxon>
        <taxon>Bos</taxon>
    </lineage>
</organism>
<protein>
    <recommendedName>
        <fullName>Ras GTPase-activating protein 1</fullName>
        <shortName>GAP</shortName>
        <shortName>GTPase-activating protein</shortName>
        <shortName>RasGAP</shortName>
    </recommendedName>
    <alternativeName>
        <fullName>Ras p21 protein activator</fullName>
    </alternativeName>
    <alternativeName>
        <fullName>p120GAP</fullName>
    </alternativeName>
</protein>
<reference key="1">
    <citation type="journal article" date="1988" name="Nature">
        <title>Cloning of bovine GAP and its interaction with oncogenic ras p21.</title>
        <authorList>
            <person name="Vogel U.S."/>
            <person name="Dixon R.A.F."/>
            <person name="Schaber M.D."/>
            <person name="Diehl R.E."/>
            <person name="Marshall M.S."/>
            <person name="Scolnick E.M."/>
            <person name="Sigal I.S."/>
            <person name="Gibbs J.B."/>
        </authorList>
    </citation>
    <scope>NUCLEOTIDE SEQUENCE [MRNA]</scope>
    <scope>PARTIAL PROTEIN SEQUENCE</scope>
    <source>
        <tissue>Brain</tissue>
    </source>
</reference>
<feature type="chain" id="PRO_0000056635" description="Ras GTPase-activating protein 1">
    <location>
        <begin position="1"/>
        <end position="1044"/>
    </location>
</feature>
<feature type="domain" description="SH2 1" evidence="6">
    <location>
        <begin position="178"/>
        <end position="269"/>
    </location>
</feature>
<feature type="domain" description="SH3" evidence="7">
    <location>
        <begin position="276"/>
        <end position="338"/>
    </location>
</feature>
<feature type="domain" description="SH2 2" evidence="6">
    <location>
        <begin position="348"/>
        <end position="438"/>
    </location>
</feature>
<feature type="domain" description="PH" evidence="4">
    <location>
        <begin position="471"/>
        <end position="574"/>
    </location>
</feature>
<feature type="domain" description="C2" evidence="3">
    <location>
        <begin position="574"/>
        <end position="687"/>
    </location>
</feature>
<feature type="repeat">
    <location>
        <begin position="646"/>
        <end position="664"/>
    </location>
</feature>
<feature type="repeat">
    <location>
        <begin position="665"/>
        <end position="683"/>
    </location>
</feature>
<feature type="domain" description="Ras-GAP" evidence="5">
    <location>
        <begin position="761"/>
        <end position="971"/>
    </location>
</feature>
<feature type="region of interest" description="Hydrophobic">
    <location>
        <begin position="1"/>
        <end position="160"/>
    </location>
</feature>
<feature type="site" description="Arginine finger; crucial for GTP hydrolysis by stabilizing the transition state" evidence="5">
    <location>
        <position position="786"/>
    </location>
</feature>
<feature type="modified residue" description="N-acetylmethionine" evidence="2">
    <location>
        <position position="1"/>
    </location>
</feature>
<feature type="modified residue" description="Phosphotyrosine" evidence="2">
    <location>
        <position position="612"/>
    </location>
</feature>
<feature type="modified residue" description="Phosphoserine" evidence="2">
    <location>
        <position position="828"/>
    </location>
</feature>
<evidence type="ECO:0000250" key="1"/>
<evidence type="ECO:0000250" key="2">
    <source>
        <dbReference type="UniProtKB" id="P20936"/>
    </source>
</evidence>
<evidence type="ECO:0000255" key="3">
    <source>
        <dbReference type="PROSITE-ProRule" id="PRU00041"/>
    </source>
</evidence>
<evidence type="ECO:0000255" key="4">
    <source>
        <dbReference type="PROSITE-ProRule" id="PRU00145"/>
    </source>
</evidence>
<evidence type="ECO:0000255" key="5">
    <source>
        <dbReference type="PROSITE-ProRule" id="PRU00167"/>
    </source>
</evidence>
<evidence type="ECO:0000255" key="6">
    <source>
        <dbReference type="PROSITE-ProRule" id="PRU00191"/>
    </source>
</evidence>
<evidence type="ECO:0000255" key="7">
    <source>
        <dbReference type="PROSITE-ProRule" id="PRU00192"/>
    </source>
</evidence>
<name>RASA1_BOVIN</name>
<proteinExistence type="evidence at protein level"/>
<comment type="function">
    <text>Inhibitory regulator of the Ras-cyclic AMP pathway. Stimulates the GTPase of normal but not oncogenic Ras p21.</text>
</comment>
<comment type="subunit">
    <text evidence="2">Interacts with SQSTM1. Interacts with SPSB1; the interaction does not promote degradation. Interacts with CAV2 (tyrosine phosphorylated form). Directly interacts with NCK1. Interacts with PDGFRB (tyrosine phosphorylated). Interacts (via SH2 domain) with the 'Tyr-9' phosphorylated form of PDPK1. Interacts with tyrosine-phosphorylated EPHB4.</text>
</comment>
<comment type="subcellular location">
    <subcellularLocation>
        <location>Cytoplasm</location>
    </subcellularLocation>
</comment>
<comment type="PTM">
    <text evidence="1">Phosphorylated by SRC and LCK. The phosphorylation SRC inhibits its ability to stimulate the Ras-GTPase activity, whereas phosphorylation by LCK does not display any effect on stimulation activity (By similarity).</text>
</comment>
<accession>P09851</accession>
<gene>
    <name type="primary">RASA1</name>
    <name type="synonym">RASA</name>
</gene>
<keyword id="KW-0007">Acetylation</keyword>
<keyword id="KW-0963">Cytoplasm</keyword>
<keyword id="KW-0903">Direct protein sequencing</keyword>
<keyword id="KW-0343">GTPase activation</keyword>
<keyword id="KW-0597">Phosphoprotein</keyword>
<keyword id="KW-1185">Reference proteome</keyword>
<keyword id="KW-0677">Repeat</keyword>
<keyword id="KW-0727">SH2 domain</keyword>
<keyword id="KW-0728">SH3 domain</keyword>
<dbReference type="EMBL" id="X12602">
    <property type="protein sequence ID" value="CAA31122.1"/>
    <property type="molecule type" value="mRNA"/>
</dbReference>
<dbReference type="PIR" id="S01966">
    <property type="entry name" value="S01966"/>
</dbReference>
<dbReference type="RefSeq" id="NP_776874.1">
    <property type="nucleotide sequence ID" value="NM_174449.2"/>
</dbReference>
<dbReference type="BMRB" id="P09851"/>
<dbReference type="SMR" id="P09851"/>
<dbReference type="BioGRID" id="159320">
    <property type="interactions" value="2"/>
</dbReference>
<dbReference type="FunCoup" id="P09851">
    <property type="interactions" value="4256"/>
</dbReference>
<dbReference type="STRING" id="9913.ENSBTAP00000012583"/>
<dbReference type="iPTMnet" id="P09851"/>
<dbReference type="PaxDb" id="9913-ENSBTAP00000012583"/>
<dbReference type="GeneID" id="282032"/>
<dbReference type="KEGG" id="bta:282032"/>
<dbReference type="CTD" id="5921"/>
<dbReference type="eggNOG" id="KOG3508">
    <property type="taxonomic scope" value="Eukaryota"/>
</dbReference>
<dbReference type="InParanoid" id="P09851"/>
<dbReference type="OrthoDB" id="1562946at2759"/>
<dbReference type="Proteomes" id="UP000009136">
    <property type="component" value="Unplaced"/>
</dbReference>
<dbReference type="GO" id="GO:0005737">
    <property type="term" value="C:cytoplasm"/>
    <property type="evidence" value="ECO:0007669"/>
    <property type="project" value="UniProtKB-SubCell"/>
</dbReference>
<dbReference type="GO" id="GO:0005096">
    <property type="term" value="F:GTPase activator activity"/>
    <property type="evidence" value="ECO:0007669"/>
    <property type="project" value="UniProtKB-KW"/>
</dbReference>
<dbReference type="GO" id="GO:0051020">
    <property type="term" value="F:GTPase binding"/>
    <property type="evidence" value="ECO:0000250"/>
    <property type="project" value="AgBase"/>
</dbReference>
<dbReference type="GO" id="GO:0005102">
    <property type="term" value="F:signaling receptor binding"/>
    <property type="evidence" value="ECO:0000250"/>
    <property type="project" value="AgBase"/>
</dbReference>
<dbReference type="GO" id="GO:0000281">
    <property type="term" value="P:mitotic cytokinesis"/>
    <property type="evidence" value="ECO:0000250"/>
    <property type="project" value="UniProtKB"/>
</dbReference>
<dbReference type="GO" id="GO:0007162">
    <property type="term" value="P:negative regulation of cell adhesion"/>
    <property type="evidence" value="ECO:0000250"/>
    <property type="project" value="AgBase"/>
</dbReference>
<dbReference type="GO" id="GO:0001953">
    <property type="term" value="P:negative regulation of cell-matrix adhesion"/>
    <property type="evidence" value="ECO:0000250"/>
    <property type="project" value="AgBase"/>
</dbReference>
<dbReference type="GO" id="GO:0043524">
    <property type="term" value="P:negative regulation of neuron apoptotic process"/>
    <property type="evidence" value="ECO:0000250"/>
    <property type="project" value="UniProtKB"/>
</dbReference>
<dbReference type="GO" id="GO:0030833">
    <property type="term" value="P:regulation of actin filament polymerization"/>
    <property type="evidence" value="ECO:0000250"/>
    <property type="project" value="AgBase"/>
</dbReference>
<dbReference type="GO" id="GO:0007165">
    <property type="term" value="P:signal transduction"/>
    <property type="evidence" value="ECO:0000250"/>
    <property type="project" value="AgBase"/>
</dbReference>
<dbReference type="GO" id="GO:0001570">
    <property type="term" value="P:vasculogenesis"/>
    <property type="evidence" value="ECO:0000250"/>
    <property type="project" value="UniProtKB"/>
</dbReference>
<dbReference type="CDD" id="cd08400">
    <property type="entry name" value="C2_Ras_p21A1"/>
    <property type="match status" value="1"/>
</dbReference>
<dbReference type="CDD" id="cd13260">
    <property type="entry name" value="PH_RASA1"/>
    <property type="match status" value="1"/>
</dbReference>
<dbReference type="CDD" id="cd05391">
    <property type="entry name" value="RasGAP_p120GAP"/>
    <property type="match status" value="1"/>
</dbReference>
<dbReference type="CDD" id="cd10354">
    <property type="entry name" value="SH2_Cterm_RasGAP"/>
    <property type="match status" value="1"/>
</dbReference>
<dbReference type="CDD" id="cd10353">
    <property type="entry name" value="SH2_Nterm_RasGAP"/>
    <property type="match status" value="1"/>
</dbReference>
<dbReference type="CDD" id="cd11788">
    <property type="entry name" value="SH3_RasGAP"/>
    <property type="match status" value="1"/>
</dbReference>
<dbReference type="FunFam" id="1.10.506.10:FF:000007">
    <property type="entry name" value="RAS p21 protein activator 1"/>
    <property type="match status" value="1"/>
</dbReference>
<dbReference type="FunFam" id="2.30.29.30:FF:000090">
    <property type="entry name" value="RAS p21 protein activator 1"/>
    <property type="match status" value="1"/>
</dbReference>
<dbReference type="FunFam" id="2.30.30.40:FF:000050">
    <property type="entry name" value="RAS p21 protein activator 1"/>
    <property type="match status" value="1"/>
</dbReference>
<dbReference type="FunFam" id="2.60.40.150:FF:000052">
    <property type="entry name" value="RAS p21 protein activator 1"/>
    <property type="match status" value="1"/>
</dbReference>
<dbReference type="FunFam" id="3.30.505.10:FF:000033">
    <property type="entry name" value="RAS p21 protein activator 1"/>
    <property type="match status" value="1"/>
</dbReference>
<dbReference type="FunFam" id="3.30.505.10:FF:000046">
    <property type="entry name" value="RAS p21 protein activator 1"/>
    <property type="match status" value="1"/>
</dbReference>
<dbReference type="Gene3D" id="2.60.40.150">
    <property type="entry name" value="C2 domain"/>
    <property type="match status" value="1"/>
</dbReference>
<dbReference type="Gene3D" id="1.10.506.10">
    <property type="entry name" value="GTPase Activation - p120gap, domain 1"/>
    <property type="match status" value="2"/>
</dbReference>
<dbReference type="Gene3D" id="2.30.29.30">
    <property type="entry name" value="Pleckstrin-homology domain (PH domain)/Phosphotyrosine-binding domain (PTB)"/>
    <property type="match status" value="1"/>
</dbReference>
<dbReference type="Gene3D" id="3.30.505.10">
    <property type="entry name" value="SH2 domain"/>
    <property type="match status" value="2"/>
</dbReference>
<dbReference type="Gene3D" id="2.30.30.40">
    <property type="entry name" value="SH3 Domains"/>
    <property type="match status" value="1"/>
</dbReference>
<dbReference type="InterPro" id="IPR000008">
    <property type="entry name" value="C2_dom"/>
</dbReference>
<dbReference type="InterPro" id="IPR035892">
    <property type="entry name" value="C2_domain_sf"/>
</dbReference>
<dbReference type="InterPro" id="IPR011993">
    <property type="entry name" value="PH-like_dom_sf"/>
</dbReference>
<dbReference type="InterPro" id="IPR001849">
    <property type="entry name" value="PH_domain"/>
</dbReference>
<dbReference type="InterPro" id="IPR039360">
    <property type="entry name" value="Ras_GTPase"/>
</dbReference>
<dbReference type="InterPro" id="IPR035842">
    <property type="entry name" value="RasGAP_C_SH2"/>
</dbReference>
<dbReference type="InterPro" id="IPR023152">
    <property type="entry name" value="RasGAP_CS"/>
</dbReference>
<dbReference type="InterPro" id="IPR001936">
    <property type="entry name" value="RasGAP_dom"/>
</dbReference>
<dbReference type="InterPro" id="IPR035841">
    <property type="entry name" value="RasGAP_N_SH2"/>
</dbReference>
<dbReference type="InterPro" id="IPR035652">
    <property type="entry name" value="RasGAP_SH3"/>
</dbReference>
<dbReference type="InterPro" id="IPR008936">
    <property type="entry name" value="Rho_GTPase_activation_prot"/>
</dbReference>
<dbReference type="InterPro" id="IPR000980">
    <property type="entry name" value="SH2"/>
</dbReference>
<dbReference type="InterPro" id="IPR036860">
    <property type="entry name" value="SH2_dom_sf"/>
</dbReference>
<dbReference type="InterPro" id="IPR036028">
    <property type="entry name" value="SH3-like_dom_sf"/>
</dbReference>
<dbReference type="InterPro" id="IPR001452">
    <property type="entry name" value="SH3_domain"/>
</dbReference>
<dbReference type="PANTHER" id="PTHR10194:SF146">
    <property type="entry name" value="RAS GTPASE-ACTIVATING PROTEIN 1"/>
    <property type="match status" value="1"/>
</dbReference>
<dbReference type="PANTHER" id="PTHR10194">
    <property type="entry name" value="RAS GTPASE-ACTIVATING PROTEINS"/>
    <property type="match status" value="1"/>
</dbReference>
<dbReference type="Pfam" id="PF00168">
    <property type="entry name" value="C2"/>
    <property type="match status" value="1"/>
</dbReference>
<dbReference type="Pfam" id="PF00169">
    <property type="entry name" value="PH"/>
    <property type="match status" value="1"/>
</dbReference>
<dbReference type="Pfam" id="PF00616">
    <property type="entry name" value="RasGAP"/>
    <property type="match status" value="1"/>
</dbReference>
<dbReference type="Pfam" id="PF00017">
    <property type="entry name" value="SH2"/>
    <property type="match status" value="2"/>
</dbReference>
<dbReference type="Pfam" id="PF00018">
    <property type="entry name" value="SH3_1"/>
    <property type="match status" value="1"/>
</dbReference>
<dbReference type="PRINTS" id="PR00401">
    <property type="entry name" value="SH2DOMAIN"/>
</dbReference>
<dbReference type="SMART" id="SM00239">
    <property type="entry name" value="C2"/>
    <property type="match status" value="1"/>
</dbReference>
<dbReference type="SMART" id="SM00233">
    <property type="entry name" value="PH"/>
    <property type="match status" value="1"/>
</dbReference>
<dbReference type="SMART" id="SM00323">
    <property type="entry name" value="RasGAP"/>
    <property type="match status" value="1"/>
</dbReference>
<dbReference type="SMART" id="SM00252">
    <property type="entry name" value="SH2"/>
    <property type="match status" value="2"/>
</dbReference>
<dbReference type="SMART" id="SM00326">
    <property type="entry name" value="SH3"/>
    <property type="match status" value="1"/>
</dbReference>
<dbReference type="SUPFAM" id="SSF49562">
    <property type="entry name" value="C2 domain (Calcium/lipid-binding domain, CaLB)"/>
    <property type="match status" value="1"/>
</dbReference>
<dbReference type="SUPFAM" id="SSF48350">
    <property type="entry name" value="GTPase activation domain, GAP"/>
    <property type="match status" value="1"/>
</dbReference>
<dbReference type="SUPFAM" id="SSF50729">
    <property type="entry name" value="PH domain-like"/>
    <property type="match status" value="1"/>
</dbReference>
<dbReference type="SUPFAM" id="SSF55550">
    <property type="entry name" value="SH2 domain"/>
    <property type="match status" value="2"/>
</dbReference>
<dbReference type="SUPFAM" id="SSF50044">
    <property type="entry name" value="SH3-domain"/>
    <property type="match status" value="1"/>
</dbReference>
<dbReference type="PROSITE" id="PS50004">
    <property type="entry name" value="C2"/>
    <property type="match status" value="1"/>
</dbReference>
<dbReference type="PROSITE" id="PS50003">
    <property type="entry name" value="PH_DOMAIN"/>
    <property type="match status" value="1"/>
</dbReference>
<dbReference type="PROSITE" id="PS00509">
    <property type="entry name" value="RAS_GTPASE_ACTIV_1"/>
    <property type="match status" value="1"/>
</dbReference>
<dbReference type="PROSITE" id="PS50018">
    <property type="entry name" value="RAS_GTPASE_ACTIV_2"/>
    <property type="match status" value="1"/>
</dbReference>
<dbReference type="PROSITE" id="PS50001">
    <property type="entry name" value="SH2"/>
    <property type="match status" value="2"/>
</dbReference>
<dbReference type="PROSITE" id="PS50002">
    <property type="entry name" value="SH3"/>
    <property type="match status" value="1"/>
</dbReference>